<dbReference type="EC" id="6.1.1.15" evidence="1"/>
<dbReference type="EMBL" id="AM933172">
    <property type="protein sequence ID" value="CAR31837.1"/>
    <property type="molecule type" value="Genomic_DNA"/>
</dbReference>
<dbReference type="RefSeq" id="WP_001260683.1">
    <property type="nucleotide sequence ID" value="NC_011294.1"/>
</dbReference>
<dbReference type="SMR" id="B5R434"/>
<dbReference type="KEGG" id="set:SEN0250"/>
<dbReference type="HOGENOM" id="CLU_016739_0_0_6"/>
<dbReference type="Proteomes" id="UP000000613">
    <property type="component" value="Chromosome"/>
</dbReference>
<dbReference type="GO" id="GO:0005829">
    <property type="term" value="C:cytosol"/>
    <property type="evidence" value="ECO:0007669"/>
    <property type="project" value="TreeGrafter"/>
</dbReference>
<dbReference type="GO" id="GO:0002161">
    <property type="term" value="F:aminoacyl-tRNA deacylase activity"/>
    <property type="evidence" value="ECO:0007669"/>
    <property type="project" value="InterPro"/>
</dbReference>
<dbReference type="GO" id="GO:0005524">
    <property type="term" value="F:ATP binding"/>
    <property type="evidence" value="ECO:0007669"/>
    <property type="project" value="UniProtKB-UniRule"/>
</dbReference>
<dbReference type="GO" id="GO:0004827">
    <property type="term" value="F:proline-tRNA ligase activity"/>
    <property type="evidence" value="ECO:0007669"/>
    <property type="project" value="UniProtKB-UniRule"/>
</dbReference>
<dbReference type="GO" id="GO:0006433">
    <property type="term" value="P:prolyl-tRNA aminoacylation"/>
    <property type="evidence" value="ECO:0007669"/>
    <property type="project" value="UniProtKB-UniRule"/>
</dbReference>
<dbReference type="CDD" id="cd04334">
    <property type="entry name" value="ProRS-INS"/>
    <property type="match status" value="1"/>
</dbReference>
<dbReference type="CDD" id="cd00861">
    <property type="entry name" value="ProRS_anticodon_short"/>
    <property type="match status" value="1"/>
</dbReference>
<dbReference type="CDD" id="cd00779">
    <property type="entry name" value="ProRS_core_prok"/>
    <property type="match status" value="1"/>
</dbReference>
<dbReference type="FunFam" id="3.30.930.10:FF:000012">
    <property type="entry name" value="Proline--tRNA ligase"/>
    <property type="match status" value="1"/>
</dbReference>
<dbReference type="FunFam" id="3.30.930.10:FF:000097">
    <property type="entry name" value="Proline--tRNA ligase"/>
    <property type="match status" value="1"/>
</dbReference>
<dbReference type="FunFam" id="3.40.50.800:FF:000006">
    <property type="entry name" value="Proline--tRNA ligase"/>
    <property type="match status" value="1"/>
</dbReference>
<dbReference type="FunFam" id="3.90.960.10:FF:000001">
    <property type="entry name" value="Proline--tRNA ligase"/>
    <property type="match status" value="1"/>
</dbReference>
<dbReference type="Gene3D" id="3.40.50.800">
    <property type="entry name" value="Anticodon-binding domain"/>
    <property type="match status" value="1"/>
</dbReference>
<dbReference type="Gene3D" id="3.30.930.10">
    <property type="entry name" value="Bira Bifunctional Protein, Domain 2"/>
    <property type="match status" value="2"/>
</dbReference>
<dbReference type="Gene3D" id="3.90.960.10">
    <property type="entry name" value="YbaK/aminoacyl-tRNA synthetase-associated domain"/>
    <property type="match status" value="1"/>
</dbReference>
<dbReference type="HAMAP" id="MF_01569">
    <property type="entry name" value="Pro_tRNA_synth_type1"/>
    <property type="match status" value="1"/>
</dbReference>
<dbReference type="InterPro" id="IPR002314">
    <property type="entry name" value="aa-tRNA-synt_IIb"/>
</dbReference>
<dbReference type="InterPro" id="IPR006195">
    <property type="entry name" value="aa-tRNA-synth_II"/>
</dbReference>
<dbReference type="InterPro" id="IPR045864">
    <property type="entry name" value="aa-tRNA-synth_II/BPL/LPL"/>
</dbReference>
<dbReference type="InterPro" id="IPR004154">
    <property type="entry name" value="Anticodon-bd"/>
</dbReference>
<dbReference type="InterPro" id="IPR036621">
    <property type="entry name" value="Anticodon-bd_dom_sf"/>
</dbReference>
<dbReference type="InterPro" id="IPR002316">
    <property type="entry name" value="Pro-tRNA-ligase_IIa"/>
</dbReference>
<dbReference type="InterPro" id="IPR004500">
    <property type="entry name" value="Pro-tRNA-synth_IIa_bac-type"/>
</dbReference>
<dbReference type="InterPro" id="IPR023717">
    <property type="entry name" value="Pro-tRNA-Synthase_IIa_type1"/>
</dbReference>
<dbReference type="InterPro" id="IPR050062">
    <property type="entry name" value="Pro-tRNA_synthetase"/>
</dbReference>
<dbReference type="InterPro" id="IPR044140">
    <property type="entry name" value="ProRS_anticodon_short"/>
</dbReference>
<dbReference type="InterPro" id="IPR033730">
    <property type="entry name" value="ProRS_core_prok"/>
</dbReference>
<dbReference type="InterPro" id="IPR036754">
    <property type="entry name" value="YbaK/aa-tRNA-synt-asso_dom_sf"/>
</dbReference>
<dbReference type="InterPro" id="IPR007214">
    <property type="entry name" value="YbaK/aa-tRNA-synth-assoc-dom"/>
</dbReference>
<dbReference type="NCBIfam" id="NF006625">
    <property type="entry name" value="PRK09194.1"/>
    <property type="match status" value="1"/>
</dbReference>
<dbReference type="NCBIfam" id="TIGR00409">
    <property type="entry name" value="proS_fam_II"/>
    <property type="match status" value="1"/>
</dbReference>
<dbReference type="PANTHER" id="PTHR42753">
    <property type="entry name" value="MITOCHONDRIAL RIBOSOME PROTEIN L39/PROLYL-TRNA LIGASE FAMILY MEMBER"/>
    <property type="match status" value="1"/>
</dbReference>
<dbReference type="PANTHER" id="PTHR42753:SF2">
    <property type="entry name" value="PROLINE--TRNA LIGASE"/>
    <property type="match status" value="1"/>
</dbReference>
<dbReference type="Pfam" id="PF03129">
    <property type="entry name" value="HGTP_anticodon"/>
    <property type="match status" value="1"/>
</dbReference>
<dbReference type="Pfam" id="PF00587">
    <property type="entry name" value="tRNA-synt_2b"/>
    <property type="match status" value="1"/>
</dbReference>
<dbReference type="Pfam" id="PF04073">
    <property type="entry name" value="tRNA_edit"/>
    <property type="match status" value="1"/>
</dbReference>
<dbReference type="PIRSF" id="PIRSF001535">
    <property type="entry name" value="ProRS_1"/>
    <property type="match status" value="1"/>
</dbReference>
<dbReference type="PRINTS" id="PR01046">
    <property type="entry name" value="TRNASYNTHPRO"/>
</dbReference>
<dbReference type="SUPFAM" id="SSF52954">
    <property type="entry name" value="Class II aaRS ABD-related"/>
    <property type="match status" value="1"/>
</dbReference>
<dbReference type="SUPFAM" id="SSF55681">
    <property type="entry name" value="Class II aaRS and biotin synthetases"/>
    <property type="match status" value="1"/>
</dbReference>
<dbReference type="SUPFAM" id="SSF55826">
    <property type="entry name" value="YbaK/ProRS associated domain"/>
    <property type="match status" value="1"/>
</dbReference>
<dbReference type="PROSITE" id="PS50862">
    <property type="entry name" value="AA_TRNA_LIGASE_II"/>
    <property type="match status" value="1"/>
</dbReference>
<sequence length="572" mass="63540">MRTSQYLLSTLKETPADAEVISHQLMLRAGMIRKLASGLYTWLPTGLRVLKKVENIVREEMNNAGAIEVSMPVVQPADLWQESGRWEQYGPELLRFVDRGERPFVLGPTHEEVITDLVRNELSSYKQLPLNFFQIQTKFRDEVRPRFGVMRSREFLMKDAYSFHTSQESLQETYDAMYAAYSRIFSRMGLDFRAVQADTGSIGGNASHEFQVLAQSGEDDIVFSDVSDYAANIELAEAIAPQTPRAAATQEMTLVDTPNAKTIAELVEQFNLPIEKTVKTLLVKAVKDSKSPLVALLVRGDHELNEVKAEKLPHVASPLTFATEEEIRAVINAGPGSLGPVNMPIPVIIDRTVAAMSDFAAGANIDGKHYFGINWDRDVATPVVADIRNVVAGDPSPDGQGTLLIKRGIEVGHIFQLGTKYSEALKASVQGEDGRNQILTMGCYGIGVTRVVAAAIEQNFDERGIVWPDAIAPFQVAILPMNMHKSFRVQELAEKLYSELRAQGIEVLMDDRKERPGVMFADMELIGIPHTIVIGDRNLDNDDIEYKYRRSGEKSLIKTGDIVDYLVKAIKG</sequence>
<reference key="1">
    <citation type="journal article" date="2008" name="Genome Res.">
        <title>Comparative genome analysis of Salmonella enteritidis PT4 and Salmonella gallinarum 287/91 provides insights into evolutionary and host adaptation pathways.</title>
        <authorList>
            <person name="Thomson N.R."/>
            <person name="Clayton D.J."/>
            <person name="Windhorst D."/>
            <person name="Vernikos G."/>
            <person name="Davidson S."/>
            <person name="Churcher C."/>
            <person name="Quail M.A."/>
            <person name="Stevens M."/>
            <person name="Jones M.A."/>
            <person name="Watson M."/>
            <person name="Barron A."/>
            <person name="Layton A."/>
            <person name="Pickard D."/>
            <person name="Kingsley R.A."/>
            <person name="Bignell A."/>
            <person name="Clark L."/>
            <person name="Harris B."/>
            <person name="Ormond D."/>
            <person name="Abdellah Z."/>
            <person name="Brooks K."/>
            <person name="Cherevach I."/>
            <person name="Chillingworth T."/>
            <person name="Woodward J."/>
            <person name="Norberczak H."/>
            <person name="Lord A."/>
            <person name="Arrowsmith C."/>
            <person name="Jagels K."/>
            <person name="Moule S."/>
            <person name="Mungall K."/>
            <person name="Saunders M."/>
            <person name="Whitehead S."/>
            <person name="Chabalgoity J.A."/>
            <person name="Maskell D."/>
            <person name="Humphreys T."/>
            <person name="Roberts M."/>
            <person name="Barrow P.A."/>
            <person name="Dougan G."/>
            <person name="Parkhill J."/>
        </authorList>
    </citation>
    <scope>NUCLEOTIDE SEQUENCE [LARGE SCALE GENOMIC DNA]</scope>
    <source>
        <strain>P125109</strain>
    </source>
</reference>
<organism>
    <name type="scientific">Salmonella enteritidis PT4 (strain P125109)</name>
    <dbReference type="NCBI Taxonomy" id="550537"/>
    <lineage>
        <taxon>Bacteria</taxon>
        <taxon>Pseudomonadati</taxon>
        <taxon>Pseudomonadota</taxon>
        <taxon>Gammaproteobacteria</taxon>
        <taxon>Enterobacterales</taxon>
        <taxon>Enterobacteriaceae</taxon>
        <taxon>Salmonella</taxon>
    </lineage>
</organism>
<proteinExistence type="inferred from homology"/>
<comment type="function">
    <text evidence="1">Catalyzes the attachment of proline to tRNA(Pro) in a two-step reaction: proline is first activated by ATP to form Pro-AMP and then transferred to the acceptor end of tRNA(Pro). As ProRS can inadvertently accommodate and process non-cognate amino acids such as alanine and cysteine, to avoid such errors it has two additional distinct editing activities against alanine. One activity is designated as 'pretransfer' editing and involves the tRNA(Pro)-independent hydrolysis of activated Ala-AMP. The other activity is designated 'posttransfer' editing and involves deacylation of mischarged Ala-tRNA(Pro). The misacylated Cys-tRNA(Pro) is not edited by ProRS.</text>
</comment>
<comment type="catalytic activity">
    <reaction evidence="1">
        <text>tRNA(Pro) + L-proline + ATP = L-prolyl-tRNA(Pro) + AMP + diphosphate</text>
        <dbReference type="Rhea" id="RHEA:14305"/>
        <dbReference type="Rhea" id="RHEA-COMP:9700"/>
        <dbReference type="Rhea" id="RHEA-COMP:9702"/>
        <dbReference type="ChEBI" id="CHEBI:30616"/>
        <dbReference type="ChEBI" id="CHEBI:33019"/>
        <dbReference type="ChEBI" id="CHEBI:60039"/>
        <dbReference type="ChEBI" id="CHEBI:78442"/>
        <dbReference type="ChEBI" id="CHEBI:78532"/>
        <dbReference type="ChEBI" id="CHEBI:456215"/>
        <dbReference type="EC" id="6.1.1.15"/>
    </reaction>
</comment>
<comment type="subunit">
    <text evidence="1">Homodimer.</text>
</comment>
<comment type="subcellular location">
    <subcellularLocation>
        <location evidence="1">Cytoplasm</location>
    </subcellularLocation>
</comment>
<comment type="domain">
    <text evidence="1">Consists of three domains: the N-terminal catalytic domain, the editing domain and the C-terminal anticodon-binding domain.</text>
</comment>
<comment type="similarity">
    <text evidence="1">Belongs to the class-II aminoacyl-tRNA synthetase family. ProS type 1 subfamily.</text>
</comment>
<accession>B5R434</accession>
<gene>
    <name evidence="1" type="primary">proS</name>
    <name type="ordered locus">SEN0250</name>
</gene>
<evidence type="ECO:0000255" key="1">
    <source>
        <dbReference type="HAMAP-Rule" id="MF_01569"/>
    </source>
</evidence>
<protein>
    <recommendedName>
        <fullName evidence="1">Proline--tRNA ligase</fullName>
        <ecNumber evidence="1">6.1.1.15</ecNumber>
    </recommendedName>
    <alternativeName>
        <fullName evidence="1">Prolyl-tRNA synthetase</fullName>
        <shortName evidence="1">ProRS</shortName>
    </alternativeName>
</protein>
<feature type="chain" id="PRO_1000199416" description="Proline--tRNA ligase">
    <location>
        <begin position="1"/>
        <end position="572"/>
    </location>
</feature>
<name>SYP_SALEP</name>
<keyword id="KW-0030">Aminoacyl-tRNA synthetase</keyword>
<keyword id="KW-0067">ATP-binding</keyword>
<keyword id="KW-0963">Cytoplasm</keyword>
<keyword id="KW-0436">Ligase</keyword>
<keyword id="KW-0547">Nucleotide-binding</keyword>
<keyword id="KW-0648">Protein biosynthesis</keyword>